<feature type="chain" id="PRO_0000347780" description="Alanine--tRNA ligase">
    <location>
        <begin position="1"/>
        <end position="873"/>
    </location>
</feature>
<feature type="binding site" evidence="1">
    <location>
        <position position="562"/>
    </location>
    <ligand>
        <name>Zn(2+)</name>
        <dbReference type="ChEBI" id="CHEBI:29105"/>
    </ligand>
</feature>
<feature type="binding site" evidence="1">
    <location>
        <position position="566"/>
    </location>
    <ligand>
        <name>Zn(2+)</name>
        <dbReference type="ChEBI" id="CHEBI:29105"/>
    </ligand>
</feature>
<feature type="binding site" evidence="1">
    <location>
        <position position="664"/>
    </location>
    <ligand>
        <name>Zn(2+)</name>
        <dbReference type="ChEBI" id="CHEBI:29105"/>
    </ligand>
</feature>
<feature type="binding site" evidence="1">
    <location>
        <position position="668"/>
    </location>
    <ligand>
        <name>Zn(2+)</name>
        <dbReference type="ChEBI" id="CHEBI:29105"/>
    </ligand>
</feature>
<sequence>MYQTTAALRSAFLEYFRQQGHQVVDSSSLVPGNDPTLLFTNAGMNQFKDCFLGMEKRSYVRAATAQRCVRAGGKHNDLDNVGYTARHHTFFEMLGNFSFGDYFKEDAIRFAWEFLTGTLKLPKEKLCVTVYHTDDEAFDIWNKQIGVPAENIIRIGDNKGAPFASDNFWQMGDTGPCGPCTEIFYDHGEHIWGGRPGSPEEDGDRFIEIWNIVFMQYNRQSDGTLDPLPKPAVDTGMGIERISAIMQGVHSNYEIDIFQKLIAKAAEIIGVSDLENKSLRVIADHIRSCAFLVADGVMPSNEGRGYVLRRIIRRAVRHGNKLGATDTFFYKLVPTLIEAMGDAAKELKATQTIVEKALKAEEEQFARTLERGLGMLDAALADLKGDTLDGETVFKLYDTYGFPVDLTADVCRERNLKVDEEGFNAAMAEQRSRAQAAGQFSADYNAALKIDTATDFCGYTELAAESKVVALYRDGESVDAAEAGAVLVVVLDNTPFYAESGGQVGDKGQLLAEGVEFNVADTQKFGQGIGHKGQLALGSIKVGDSLKAMVDKKLRHRTELNHSVTHLLHAALRQVLGTHVTQKGSLVDPERLRFDFSHFEGVKREELKAVEDLVNTQIRRNHELNFAEMDIEEAKAKGAMALFGEKYDSKVRVVTMGDFSIELCGGTHVGRTGDIGLFKITSEGGIAAGIRRIEAVTGAAAMAYVAQQQAELEEAAALLKGDVASVVAKLKAQLDKARQLEKENAQLKDKLAAAASADLAGDAQEINGVKVLVKRLEGVEAGALRGLQDELKQKLKSGVVLLAIGSGDKVNLIAGVTQDLTGKVKAGELVAMVAAQVGGKGGGRPDMAQAGGSEPAKLDGALASVVPWLNERL</sequence>
<keyword id="KW-0030">Aminoacyl-tRNA synthetase</keyword>
<keyword id="KW-0067">ATP-binding</keyword>
<keyword id="KW-0963">Cytoplasm</keyword>
<keyword id="KW-0436">Ligase</keyword>
<keyword id="KW-0479">Metal-binding</keyword>
<keyword id="KW-0547">Nucleotide-binding</keyword>
<keyword id="KW-0648">Protein biosynthesis</keyword>
<keyword id="KW-1185">Reference proteome</keyword>
<keyword id="KW-0694">RNA-binding</keyword>
<keyword id="KW-0820">tRNA-binding</keyword>
<keyword id="KW-0862">Zinc</keyword>
<evidence type="ECO:0000255" key="1">
    <source>
        <dbReference type="HAMAP-Rule" id="MF_00036"/>
    </source>
</evidence>
<evidence type="ECO:0000305" key="2"/>
<gene>
    <name evidence="1" type="primary">alaS</name>
    <name type="ordered locus">Sama_1048</name>
</gene>
<comment type="function">
    <text evidence="1">Catalyzes the attachment of alanine to tRNA(Ala) in a two-step reaction: alanine is first activated by ATP to form Ala-AMP and then transferred to the acceptor end of tRNA(Ala). Also edits incorrectly charged Ser-tRNA(Ala) and Gly-tRNA(Ala) via its editing domain.</text>
</comment>
<comment type="catalytic activity">
    <reaction evidence="1">
        <text>tRNA(Ala) + L-alanine + ATP = L-alanyl-tRNA(Ala) + AMP + diphosphate</text>
        <dbReference type="Rhea" id="RHEA:12540"/>
        <dbReference type="Rhea" id="RHEA-COMP:9657"/>
        <dbReference type="Rhea" id="RHEA-COMP:9923"/>
        <dbReference type="ChEBI" id="CHEBI:30616"/>
        <dbReference type="ChEBI" id="CHEBI:33019"/>
        <dbReference type="ChEBI" id="CHEBI:57972"/>
        <dbReference type="ChEBI" id="CHEBI:78442"/>
        <dbReference type="ChEBI" id="CHEBI:78497"/>
        <dbReference type="ChEBI" id="CHEBI:456215"/>
        <dbReference type="EC" id="6.1.1.7"/>
    </reaction>
</comment>
<comment type="cofactor">
    <cofactor evidence="1">
        <name>Zn(2+)</name>
        <dbReference type="ChEBI" id="CHEBI:29105"/>
    </cofactor>
    <text evidence="1">Binds 1 zinc ion per subunit.</text>
</comment>
<comment type="subcellular location">
    <subcellularLocation>
        <location evidence="1">Cytoplasm</location>
    </subcellularLocation>
</comment>
<comment type="domain">
    <text evidence="1">Consists of three domains; the N-terminal catalytic domain, the editing domain and the C-terminal C-Ala domain. The editing domain removes incorrectly charged amino acids, while the C-Ala domain, along with tRNA(Ala), serves as a bridge to cooperatively bring together the editing and aminoacylation centers thus stimulating deacylation of misacylated tRNAs.</text>
</comment>
<comment type="similarity">
    <text evidence="1">Belongs to the class-II aminoacyl-tRNA synthetase family.</text>
</comment>
<comment type="sequence caution" evidence="2">
    <conflict type="erroneous initiation">
        <sequence resource="EMBL-CDS" id="ABL99255"/>
    </conflict>
</comment>
<accession>A1S4E9</accession>
<organism>
    <name type="scientific">Shewanella amazonensis (strain ATCC BAA-1098 / SB2B)</name>
    <dbReference type="NCBI Taxonomy" id="326297"/>
    <lineage>
        <taxon>Bacteria</taxon>
        <taxon>Pseudomonadati</taxon>
        <taxon>Pseudomonadota</taxon>
        <taxon>Gammaproteobacteria</taxon>
        <taxon>Alteromonadales</taxon>
        <taxon>Shewanellaceae</taxon>
        <taxon>Shewanella</taxon>
    </lineage>
</organism>
<dbReference type="EC" id="6.1.1.7" evidence="1"/>
<dbReference type="EMBL" id="CP000507">
    <property type="protein sequence ID" value="ABL99255.1"/>
    <property type="status" value="ALT_INIT"/>
    <property type="molecule type" value="Genomic_DNA"/>
</dbReference>
<dbReference type="RefSeq" id="WP_041410151.1">
    <property type="nucleotide sequence ID" value="NC_008700.1"/>
</dbReference>
<dbReference type="SMR" id="A1S4E9"/>
<dbReference type="STRING" id="326297.Sama_1048"/>
<dbReference type="KEGG" id="saz:Sama_1048"/>
<dbReference type="eggNOG" id="COG0013">
    <property type="taxonomic scope" value="Bacteria"/>
</dbReference>
<dbReference type="HOGENOM" id="CLU_004485_1_1_6"/>
<dbReference type="OrthoDB" id="9803884at2"/>
<dbReference type="Proteomes" id="UP000009175">
    <property type="component" value="Chromosome"/>
</dbReference>
<dbReference type="GO" id="GO:0005829">
    <property type="term" value="C:cytosol"/>
    <property type="evidence" value="ECO:0007669"/>
    <property type="project" value="TreeGrafter"/>
</dbReference>
<dbReference type="GO" id="GO:0004813">
    <property type="term" value="F:alanine-tRNA ligase activity"/>
    <property type="evidence" value="ECO:0007669"/>
    <property type="project" value="UniProtKB-UniRule"/>
</dbReference>
<dbReference type="GO" id="GO:0002161">
    <property type="term" value="F:aminoacyl-tRNA deacylase activity"/>
    <property type="evidence" value="ECO:0007669"/>
    <property type="project" value="TreeGrafter"/>
</dbReference>
<dbReference type="GO" id="GO:0005524">
    <property type="term" value="F:ATP binding"/>
    <property type="evidence" value="ECO:0007669"/>
    <property type="project" value="UniProtKB-UniRule"/>
</dbReference>
<dbReference type="GO" id="GO:0000049">
    <property type="term" value="F:tRNA binding"/>
    <property type="evidence" value="ECO:0007669"/>
    <property type="project" value="UniProtKB-KW"/>
</dbReference>
<dbReference type="GO" id="GO:0008270">
    <property type="term" value="F:zinc ion binding"/>
    <property type="evidence" value="ECO:0007669"/>
    <property type="project" value="UniProtKB-UniRule"/>
</dbReference>
<dbReference type="GO" id="GO:0006419">
    <property type="term" value="P:alanyl-tRNA aminoacylation"/>
    <property type="evidence" value="ECO:0007669"/>
    <property type="project" value="UniProtKB-UniRule"/>
</dbReference>
<dbReference type="GO" id="GO:0045892">
    <property type="term" value="P:negative regulation of DNA-templated transcription"/>
    <property type="evidence" value="ECO:0007669"/>
    <property type="project" value="TreeGrafter"/>
</dbReference>
<dbReference type="CDD" id="cd00673">
    <property type="entry name" value="AlaRS_core"/>
    <property type="match status" value="1"/>
</dbReference>
<dbReference type="FunFam" id="2.40.30.130:FF:000001">
    <property type="entry name" value="Alanine--tRNA ligase"/>
    <property type="match status" value="1"/>
</dbReference>
<dbReference type="FunFam" id="3.10.310.40:FF:000001">
    <property type="entry name" value="Alanine--tRNA ligase"/>
    <property type="match status" value="1"/>
</dbReference>
<dbReference type="FunFam" id="3.30.54.20:FF:000001">
    <property type="entry name" value="Alanine--tRNA ligase"/>
    <property type="match status" value="1"/>
</dbReference>
<dbReference type="FunFam" id="3.30.930.10:FF:000004">
    <property type="entry name" value="Alanine--tRNA ligase"/>
    <property type="match status" value="1"/>
</dbReference>
<dbReference type="FunFam" id="3.30.980.10:FF:000004">
    <property type="entry name" value="Alanine--tRNA ligase, cytoplasmic"/>
    <property type="match status" value="1"/>
</dbReference>
<dbReference type="Gene3D" id="2.40.30.130">
    <property type="match status" value="1"/>
</dbReference>
<dbReference type="Gene3D" id="3.10.310.40">
    <property type="match status" value="1"/>
</dbReference>
<dbReference type="Gene3D" id="3.30.54.20">
    <property type="match status" value="1"/>
</dbReference>
<dbReference type="Gene3D" id="6.10.250.550">
    <property type="match status" value="1"/>
</dbReference>
<dbReference type="Gene3D" id="3.30.930.10">
    <property type="entry name" value="Bira Bifunctional Protein, Domain 2"/>
    <property type="match status" value="1"/>
</dbReference>
<dbReference type="Gene3D" id="3.30.980.10">
    <property type="entry name" value="Threonyl-trna Synthetase, Chain A, domain 2"/>
    <property type="match status" value="1"/>
</dbReference>
<dbReference type="HAMAP" id="MF_00036_B">
    <property type="entry name" value="Ala_tRNA_synth_B"/>
    <property type="match status" value="1"/>
</dbReference>
<dbReference type="InterPro" id="IPR045864">
    <property type="entry name" value="aa-tRNA-synth_II/BPL/LPL"/>
</dbReference>
<dbReference type="InterPro" id="IPR002318">
    <property type="entry name" value="Ala-tRNA-lgiase_IIc"/>
</dbReference>
<dbReference type="InterPro" id="IPR018162">
    <property type="entry name" value="Ala-tRNA-ligase_IIc_anticod-bd"/>
</dbReference>
<dbReference type="InterPro" id="IPR018165">
    <property type="entry name" value="Ala-tRNA-synth_IIc_core"/>
</dbReference>
<dbReference type="InterPro" id="IPR018164">
    <property type="entry name" value="Ala-tRNA-synth_IIc_N"/>
</dbReference>
<dbReference type="InterPro" id="IPR050058">
    <property type="entry name" value="Ala-tRNA_ligase"/>
</dbReference>
<dbReference type="InterPro" id="IPR023033">
    <property type="entry name" value="Ala_tRNA_ligase_euk/bac"/>
</dbReference>
<dbReference type="InterPro" id="IPR003156">
    <property type="entry name" value="DHHA1_dom"/>
</dbReference>
<dbReference type="InterPro" id="IPR018163">
    <property type="entry name" value="Thr/Ala-tRNA-synth_IIc_edit"/>
</dbReference>
<dbReference type="InterPro" id="IPR009000">
    <property type="entry name" value="Transl_B-barrel_sf"/>
</dbReference>
<dbReference type="InterPro" id="IPR012947">
    <property type="entry name" value="tRNA_SAD"/>
</dbReference>
<dbReference type="NCBIfam" id="TIGR00344">
    <property type="entry name" value="alaS"/>
    <property type="match status" value="1"/>
</dbReference>
<dbReference type="PANTHER" id="PTHR11777:SF9">
    <property type="entry name" value="ALANINE--TRNA LIGASE, CYTOPLASMIC"/>
    <property type="match status" value="1"/>
</dbReference>
<dbReference type="PANTHER" id="PTHR11777">
    <property type="entry name" value="ALANYL-TRNA SYNTHETASE"/>
    <property type="match status" value="1"/>
</dbReference>
<dbReference type="Pfam" id="PF02272">
    <property type="entry name" value="DHHA1"/>
    <property type="match status" value="1"/>
</dbReference>
<dbReference type="Pfam" id="PF01411">
    <property type="entry name" value="tRNA-synt_2c"/>
    <property type="match status" value="1"/>
</dbReference>
<dbReference type="Pfam" id="PF07973">
    <property type="entry name" value="tRNA_SAD"/>
    <property type="match status" value="1"/>
</dbReference>
<dbReference type="PRINTS" id="PR00980">
    <property type="entry name" value="TRNASYNTHALA"/>
</dbReference>
<dbReference type="SMART" id="SM00863">
    <property type="entry name" value="tRNA_SAD"/>
    <property type="match status" value="1"/>
</dbReference>
<dbReference type="SUPFAM" id="SSF55681">
    <property type="entry name" value="Class II aaRS and biotin synthetases"/>
    <property type="match status" value="1"/>
</dbReference>
<dbReference type="SUPFAM" id="SSF101353">
    <property type="entry name" value="Putative anticodon-binding domain of alanyl-tRNA synthetase (AlaRS)"/>
    <property type="match status" value="1"/>
</dbReference>
<dbReference type="SUPFAM" id="SSF55186">
    <property type="entry name" value="ThrRS/AlaRS common domain"/>
    <property type="match status" value="1"/>
</dbReference>
<dbReference type="SUPFAM" id="SSF50447">
    <property type="entry name" value="Translation proteins"/>
    <property type="match status" value="1"/>
</dbReference>
<dbReference type="PROSITE" id="PS50860">
    <property type="entry name" value="AA_TRNA_LIGASE_II_ALA"/>
    <property type="match status" value="1"/>
</dbReference>
<reference key="1">
    <citation type="submission" date="2006-12" db="EMBL/GenBank/DDBJ databases">
        <title>Complete sequence of Shewanella amazonensis SB2B.</title>
        <authorList>
            <consortium name="US DOE Joint Genome Institute"/>
            <person name="Copeland A."/>
            <person name="Lucas S."/>
            <person name="Lapidus A."/>
            <person name="Barry K."/>
            <person name="Detter J.C."/>
            <person name="Glavina del Rio T."/>
            <person name="Hammon N."/>
            <person name="Israni S."/>
            <person name="Dalin E."/>
            <person name="Tice H."/>
            <person name="Pitluck S."/>
            <person name="Munk A.C."/>
            <person name="Brettin T."/>
            <person name="Bruce D."/>
            <person name="Han C."/>
            <person name="Tapia R."/>
            <person name="Gilna P."/>
            <person name="Schmutz J."/>
            <person name="Larimer F."/>
            <person name="Land M."/>
            <person name="Hauser L."/>
            <person name="Kyrpides N."/>
            <person name="Mikhailova N."/>
            <person name="Fredrickson J."/>
            <person name="Richardson P."/>
        </authorList>
    </citation>
    <scope>NUCLEOTIDE SEQUENCE [LARGE SCALE GENOMIC DNA]</scope>
    <source>
        <strain>ATCC BAA-1098 / SB2B</strain>
    </source>
</reference>
<name>SYA_SHEAM</name>
<proteinExistence type="inferred from homology"/>
<protein>
    <recommendedName>
        <fullName evidence="1">Alanine--tRNA ligase</fullName>
        <ecNumber evidence="1">6.1.1.7</ecNumber>
    </recommendedName>
    <alternativeName>
        <fullName evidence="1">Alanyl-tRNA synthetase</fullName>
        <shortName evidence="1">AlaRS</shortName>
    </alternativeName>
</protein>